<keyword id="KW-0067">ATP-binding</keyword>
<keyword id="KW-0238">DNA-binding</keyword>
<keyword id="KW-0347">Helicase</keyword>
<keyword id="KW-0378">Hydrolase</keyword>
<keyword id="KW-0426">Late protein</keyword>
<keyword id="KW-0547">Nucleotide-binding</keyword>
<keyword id="KW-0804">Transcription</keyword>
<keyword id="KW-0946">Virion</keyword>
<organism>
    <name type="scientific">Vaccinia virus (strain Tian Tan)</name>
    <name type="common">VACV</name>
    <dbReference type="NCBI Taxonomy" id="10253"/>
    <lineage>
        <taxon>Viruses</taxon>
        <taxon>Varidnaviria</taxon>
        <taxon>Bamfordvirae</taxon>
        <taxon>Nucleocytoviricota</taxon>
        <taxon>Pokkesviricetes</taxon>
        <taxon>Chitovirales</taxon>
        <taxon>Poxviridae</taxon>
        <taxon>Chordopoxvirinae</taxon>
        <taxon>Orthopoxvirus</taxon>
        <taxon>Vaccinia virus</taxon>
    </lineage>
</organism>
<protein>
    <recommendedName>
        <fullName>Transcript termination protein A18</fullName>
        <ecNumber>3.6.4.-</ecNumber>
    </recommendedName>
    <alternativeName>
        <fullName>56 kDa abortive late protein</fullName>
    </alternativeName>
</protein>
<evidence type="ECO:0000250" key="1"/>
<evidence type="ECO:0000255" key="2">
    <source>
        <dbReference type="PROSITE-ProRule" id="PRU00541"/>
    </source>
</evidence>
<evidence type="ECO:0000305" key="3"/>
<sequence>MSLLKMEYNLYAELKKMTCGQPLSLFNEDGDFVEVEPGSSFKFLIPKGFYASPSVKTSLVFETLTTTDNKITSINPTNAPKLYPLQRKVVSEVVSNMRKMIESKRPLYITLHLACGFGKTITTCYLMATHGRKTVICVPNKMLIHQWKTQVEAVGLEHKISIDGVSSLLKELKTQSPDVLIVVSRHLTNDAFCKYINKHYDLFILDESHTYNLMNNTAVTRFLAYYPPMMCYFLTATPRPANRIYCNSIINIAKLSDLKKTIYAVDSFFEPYSTDNIRHMVKRLDGPSNKYHIYTEKLLSVDEPRNQLILNTLVEEFKSGTINRILVITKLREHMVLFYKRLLDLFGPEVVFIGDAQNRRTPDMVKSIKELNRFIFVSTLFYSGTGLDIPSLDSLFICSAVINNMQIEQLLGRVCRETELLDRTVYVFPNTSIKEIKYMIGNFMQRIISLSVDKLGFKQKSYRKHQESDPTSVCTTSSREERVLNRIFNSQNR</sequence>
<proteinExistence type="inferred from homology"/>
<feature type="chain" id="PRO_0000102177" description="Transcript termination protein A18">
    <location>
        <begin position="1"/>
        <end position="493"/>
    </location>
</feature>
<feature type="domain" description="Helicase ATP-binding" evidence="2">
    <location>
        <begin position="100"/>
        <end position="256"/>
    </location>
</feature>
<feature type="short sequence motif" description="DESH box">
    <location>
        <begin position="206"/>
        <end position="209"/>
    </location>
</feature>
<feature type="binding site" evidence="2">
    <location>
        <begin position="113"/>
        <end position="120"/>
    </location>
    <ligand>
        <name>ATP</name>
        <dbReference type="ChEBI" id="CHEBI:30616"/>
    </ligand>
</feature>
<accession>Q9JF82</accession>
<dbReference type="EC" id="3.6.4.-"/>
<dbReference type="EMBL" id="AF095689">
    <property type="protein sequence ID" value="AAF34012.1"/>
    <property type="molecule type" value="Genomic_DNA"/>
</dbReference>
<dbReference type="Proteomes" id="UP000163220">
    <property type="component" value="Genome"/>
</dbReference>
<dbReference type="GO" id="GO:0044423">
    <property type="term" value="C:virion component"/>
    <property type="evidence" value="ECO:0007669"/>
    <property type="project" value="UniProtKB-KW"/>
</dbReference>
<dbReference type="GO" id="GO:0005524">
    <property type="term" value="F:ATP binding"/>
    <property type="evidence" value="ECO:0007669"/>
    <property type="project" value="UniProtKB-KW"/>
</dbReference>
<dbReference type="GO" id="GO:0003677">
    <property type="term" value="F:DNA binding"/>
    <property type="evidence" value="ECO:0007669"/>
    <property type="project" value="UniProtKB-KW"/>
</dbReference>
<dbReference type="GO" id="GO:0004386">
    <property type="term" value="F:helicase activity"/>
    <property type="evidence" value="ECO:0007669"/>
    <property type="project" value="UniProtKB-KW"/>
</dbReference>
<dbReference type="GO" id="GO:0016787">
    <property type="term" value="F:hydrolase activity"/>
    <property type="evidence" value="ECO:0007669"/>
    <property type="project" value="UniProtKB-KW"/>
</dbReference>
<dbReference type="CDD" id="cd18785">
    <property type="entry name" value="SF2_C"/>
    <property type="match status" value="1"/>
</dbReference>
<dbReference type="Gene3D" id="3.40.50.300">
    <property type="entry name" value="P-loop containing nucleotide triphosphate hydrolases"/>
    <property type="match status" value="2"/>
</dbReference>
<dbReference type="InterPro" id="IPR006935">
    <property type="entry name" value="Helicase/UvrB_N"/>
</dbReference>
<dbReference type="InterPro" id="IPR014001">
    <property type="entry name" value="Helicase_ATP-bd"/>
</dbReference>
<dbReference type="InterPro" id="IPR050742">
    <property type="entry name" value="Helicase_Restrict-Modif_Enz"/>
</dbReference>
<dbReference type="InterPro" id="IPR027417">
    <property type="entry name" value="P-loop_NTPase"/>
</dbReference>
<dbReference type="PANTHER" id="PTHR47396:SF1">
    <property type="entry name" value="ATP-DEPENDENT HELICASE IRC3-RELATED"/>
    <property type="match status" value="1"/>
</dbReference>
<dbReference type="PANTHER" id="PTHR47396">
    <property type="entry name" value="TYPE I RESTRICTION ENZYME ECOKI R PROTEIN"/>
    <property type="match status" value="1"/>
</dbReference>
<dbReference type="Pfam" id="PF04851">
    <property type="entry name" value="ResIII"/>
    <property type="match status" value="1"/>
</dbReference>
<dbReference type="SMART" id="SM00487">
    <property type="entry name" value="DEXDc"/>
    <property type="match status" value="1"/>
</dbReference>
<dbReference type="SUPFAM" id="SSF52540">
    <property type="entry name" value="P-loop containing nucleoside triphosphate hydrolases"/>
    <property type="match status" value="1"/>
</dbReference>
<dbReference type="PROSITE" id="PS51192">
    <property type="entry name" value="HELICASE_ATP_BIND_1"/>
    <property type="match status" value="1"/>
</dbReference>
<gene>
    <name type="ORF">TA19L</name>
</gene>
<reference key="1">
    <citation type="submission" date="1998-09" db="EMBL/GenBank/DDBJ databases">
        <title>Complete genomic sequence of vaccinia virus (Tian Tan strain).</title>
        <authorList>
            <person name="Jin Q."/>
            <person name="Hou Y.D."/>
            <person name="Cheng N.H."/>
            <person name="Yao E.M."/>
            <person name="Cheng S.X."/>
            <person name="Yang X.K."/>
            <person name="Jing D.Y."/>
            <person name="Yu W.H."/>
            <person name="Yuan J.S."/>
            <person name="Ma X.J."/>
        </authorList>
    </citation>
    <scope>NUCLEOTIDE SEQUENCE [LARGE SCALE GENOMIC DNA]</scope>
</reference>
<comment type="function">
    <text evidence="1">DNA helicase which seems to act as a postreplicative transcription termination factor. Involved in ATP-dependent release of nascent RNA. Forms a stable complex with single-stranded DNA, and to a lesser extent RNA (By similarity).</text>
</comment>
<comment type="subunit">
    <text evidence="1">Interacts with G2. Might be part of a transcription complex composed at least of G2, A18, and H5.</text>
</comment>
<comment type="subcellular location">
    <subcellularLocation>
        <location evidence="1">Virion</location>
    </subcellularLocation>
    <text evidence="1">Localizes to the virion core.</text>
</comment>
<comment type="similarity">
    <text evidence="3">Belongs to the helicase family. Poxviruses subfamily.</text>
</comment>
<name>A18_VACCT</name>
<organismHost>
    <name type="scientific">Homo sapiens</name>
    <name type="common">Human</name>
    <dbReference type="NCBI Taxonomy" id="9606"/>
</organismHost>